<comment type="function">
    <text evidence="1">Involved in the biosynthesis of the chorismate, which leads to the biosynthesis of aromatic amino acids. Catalyzes the reversible NADPH linked reduction of 3-dehydroshikimate (DHSA) to yield shikimate (SA).</text>
</comment>
<comment type="catalytic activity">
    <reaction evidence="1">
        <text>shikimate + NADP(+) = 3-dehydroshikimate + NADPH + H(+)</text>
        <dbReference type="Rhea" id="RHEA:17737"/>
        <dbReference type="ChEBI" id="CHEBI:15378"/>
        <dbReference type="ChEBI" id="CHEBI:16630"/>
        <dbReference type="ChEBI" id="CHEBI:36208"/>
        <dbReference type="ChEBI" id="CHEBI:57783"/>
        <dbReference type="ChEBI" id="CHEBI:58349"/>
        <dbReference type="EC" id="1.1.1.25"/>
    </reaction>
</comment>
<comment type="pathway">
    <text evidence="1">Metabolic intermediate biosynthesis; chorismate biosynthesis; chorismate from D-erythrose 4-phosphate and phosphoenolpyruvate: step 4/7.</text>
</comment>
<comment type="subunit">
    <text evidence="1">Homodimer.</text>
</comment>
<comment type="similarity">
    <text evidence="1">Belongs to the shikimate dehydrogenase family.</text>
</comment>
<name>AROE_STAAB</name>
<accession>Q2YT32</accession>
<gene>
    <name evidence="1" type="primary">aroE</name>
    <name type="ordered locus">SAB1468c</name>
</gene>
<keyword id="KW-0028">Amino-acid biosynthesis</keyword>
<keyword id="KW-0057">Aromatic amino acid biosynthesis</keyword>
<keyword id="KW-0521">NADP</keyword>
<keyword id="KW-0560">Oxidoreductase</keyword>
<protein>
    <recommendedName>
        <fullName evidence="1">Shikimate dehydrogenase (NADP(+))</fullName>
        <shortName evidence="1">SDH</shortName>
        <ecNumber evidence="1">1.1.1.25</ecNumber>
    </recommendedName>
</protein>
<feature type="chain" id="PRO_1000021341" description="Shikimate dehydrogenase (NADP(+))">
    <location>
        <begin position="1"/>
        <end position="268"/>
    </location>
</feature>
<feature type="active site" description="Proton acceptor" evidence="1">
    <location>
        <position position="64"/>
    </location>
</feature>
<feature type="binding site" evidence="1">
    <location>
        <begin position="13"/>
        <end position="15"/>
    </location>
    <ligand>
        <name>shikimate</name>
        <dbReference type="ChEBI" id="CHEBI:36208"/>
    </ligand>
</feature>
<feature type="binding site" evidence="1">
    <location>
        <position position="60"/>
    </location>
    <ligand>
        <name>shikimate</name>
        <dbReference type="ChEBI" id="CHEBI:36208"/>
    </ligand>
</feature>
<feature type="binding site" evidence="1">
    <location>
        <position position="76"/>
    </location>
    <ligand>
        <name>NADP(+)</name>
        <dbReference type="ChEBI" id="CHEBI:58349"/>
    </ligand>
</feature>
<feature type="binding site" evidence="1">
    <location>
        <position position="85"/>
    </location>
    <ligand>
        <name>shikimate</name>
        <dbReference type="ChEBI" id="CHEBI:36208"/>
    </ligand>
</feature>
<feature type="binding site" evidence="1">
    <location>
        <position position="100"/>
    </location>
    <ligand>
        <name>shikimate</name>
        <dbReference type="ChEBI" id="CHEBI:36208"/>
    </ligand>
</feature>
<feature type="binding site" evidence="1">
    <location>
        <begin position="124"/>
        <end position="128"/>
    </location>
    <ligand>
        <name>NADP(+)</name>
        <dbReference type="ChEBI" id="CHEBI:58349"/>
    </ligand>
</feature>
<feature type="binding site" evidence="1">
    <location>
        <begin position="148"/>
        <end position="153"/>
    </location>
    <ligand>
        <name>NADP(+)</name>
        <dbReference type="ChEBI" id="CHEBI:58349"/>
    </ligand>
</feature>
<feature type="binding site" evidence="1">
    <location>
        <position position="209"/>
    </location>
    <ligand>
        <name>NADP(+)</name>
        <dbReference type="ChEBI" id="CHEBI:58349"/>
    </ligand>
</feature>
<feature type="binding site" evidence="1">
    <location>
        <position position="211"/>
    </location>
    <ligand>
        <name>shikimate</name>
        <dbReference type="ChEBI" id="CHEBI:36208"/>
    </ligand>
</feature>
<feature type="binding site" evidence="1">
    <location>
        <position position="232"/>
    </location>
    <ligand>
        <name>NADP(+)</name>
        <dbReference type="ChEBI" id="CHEBI:58349"/>
    </ligand>
</feature>
<organism>
    <name type="scientific">Staphylococcus aureus (strain bovine RF122 / ET3-1)</name>
    <dbReference type="NCBI Taxonomy" id="273036"/>
    <lineage>
        <taxon>Bacteria</taxon>
        <taxon>Bacillati</taxon>
        <taxon>Bacillota</taxon>
        <taxon>Bacilli</taxon>
        <taxon>Bacillales</taxon>
        <taxon>Staphylococcaceae</taxon>
        <taxon>Staphylococcus</taxon>
    </lineage>
</organism>
<proteinExistence type="inferred from homology"/>
<dbReference type="EC" id="1.1.1.25" evidence="1"/>
<dbReference type="EMBL" id="AJ938182">
    <property type="protein sequence ID" value="CAI81157.1"/>
    <property type="molecule type" value="Genomic_DNA"/>
</dbReference>
<dbReference type="RefSeq" id="WP_000666755.1">
    <property type="nucleotide sequence ID" value="NC_007622.1"/>
</dbReference>
<dbReference type="SMR" id="Q2YT32"/>
<dbReference type="KEGG" id="sab:SAB1468c"/>
<dbReference type="HOGENOM" id="CLU_044063_4_1_9"/>
<dbReference type="UniPathway" id="UPA00053">
    <property type="reaction ID" value="UER00087"/>
</dbReference>
<dbReference type="GO" id="GO:0005829">
    <property type="term" value="C:cytosol"/>
    <property type="evidence" value="ECO:0007669"/>
    <property type="project" value="TreeGrafter"/>
</dbReference>
<dbReference type="GO" id="GO:0050661">
    <property type="term" value="F:NADP binding"/>
    <property type="evidence" value="ECO:0007669"/>
    <property type="project" value="InterPro"/>
</dbReference>
<dbReference type="GO" id="GO:0004764">
    <property type="term" value="F:shikimate 3-dehydrogenase (NADP+) activity"/>
    <property type="evidence" value="ECO:0007669"/>
    <property type="project" value="UniProtKB-UniRule"/>
</dbReference>
<dbReference type="GO" id="GO:0008652">
    <property type="term" value="P:amino acid biosynthetic process"/>
    <property type="evidence" value="ECO:0007669"/>
    <property type="project" value="UniProtKB-KW"/>
</dbReference>
<dbReference type="GO" id="GO:0009073">
    <property type="term" value="P:aromatic amino acid family biosynthetic process"/>
    <property type="evidence" value="ECO:0007669"/>
    <property type="project" value="UniProtKB-KW"/>
</dbReference>
<dbReference type="GO" id="GO:0009423">
    <property type="term" value="P:chorismate biosynthetic process"/>
    <property type="evidence" value="ECO:0007669"/>
    <property type="project" value="UniProtKB-UniRule"/>
</dbReference>
<dbReference type="GO" id="GO:0019632">
    <property type="term" value="P:shikimate metabolic process"/>
    <property type="evidence" value="ECO:0007669"/>
    <property type="project" value="InterPro"/>
</dbReference>
<dbReference type="CDD" id="cd01065">
    <property type="entry name" value="NAD_bind_Shikimate_DH"/>
    <property type="match status" value="1"/>
</dbReference>
<dbReference type="FunFam" id="3.40.50.10860:FF:000016">
    <property type="entry name" value="Shikimate dehydrogenase (NADP(+))"/>
    <property type="match status" value="1"/>
</dbReference>
<dbReference type="FunFam" id="3.40.50.720:FF:000445">
    <property type="entry name" value="Shikimate dehydrogenase (NADP(+))"/>
    <property type="match status" value="1"/>
</dbReference>
<dbReference type="Gene3D" id="3.40.50.10860">
    <property type="entry name" value="Leucine Dehydrogenase, chain A, domain 1"/>
    <property type="match status" value="1"/>
</dbReference>
<dbReference type="Gene3D" id="3.40.50.720">
    <property type="entry name" value="NAD(P)-binding Rossmann-like Domain"/>
    <property type="match status" value="1"/>
</dbReference>
<dbReference type="HAMAP" id="MF_00222">
    <property type="entry name" value="Shikimate_DH_AroE"/>
    <property type="match status" value="1"/>
</dbReference>
<dbReference type="InterPro" id="IPR046346">
    <property type="entry name" value="Aminoacid_DH-like_N_sf"/>
</dbReference>
<dbReference type="InterPro" id="IPR036291">
    <property type="entry name" value="NAD(P)-bd_dom_sf"/>
</dbReference>
<dbReference type="InterPro" id="IPR041121">
    <property type="entry name" value="SDH_C"/>
</dbReference>
<dbReference type="InterPro" id="IPR011342">
    <property type="entry name" value="Shikimate_DH"/>
</dbReference>
<dbReference type="InterPro" id="IPR013708">
    <property type="entry name" value="Shikimate_DH-bd_N"/>
</dbReference>
<dbReference type="InterPro" id="IPR022893">
    <property type="entry name" value="Shikimate_DH_fam"/>
</dbReference>
<dbReference type="InterPro" id="IPR006151">
    <property type="entry name" value="Shikm_DH/Glu-tRNA_Rdtase"/>
</dbReference>
<dbReference type="NCBIfam" id="TIGR00507">
    <property type="entry name" value="aroE"/>
    <property type="match status" value="1"/>
</dbReference>
<dbReference type="PANTHER" id="PTHR21089:SF1">
    <property type="entry name" value="BIFUNCTIONAL 3-DEHYDROQUINATE DEHYDRATASE_SHIKIMATE DEHYDROGENASE, CHLOROPLASTIC"/>
    <property type="match status" value="1"/>
</dbReference>
<dbReference type="PANTHER" id="PTHR21089">
    <property type="entry name" value="SHIKIMATE DEHYDROGENASE"/>
    <property type="match status" value="1"/>
</dbReference>
<dbReference type="Pfam" id="PF18317">
    <property type="entry name" value="SDH_C"/>
    <property type="match status" value="1"/>
</dbReference>
<dbReference type="Pfam" id="PF01488">
    <property type="entry name" value="Shikimate_DH"/>
    <property type="match status" value="1"/>
</dbReference>
<dbReference type="Pfam" id="PF08501">
    <property type="entry name" value="Shikimate_dh_N"/>
    <property type="match status" value="1"/>
</dbReference>
<dbReference type="SUPFAM" id="SSF53223">
    <property type="entry name" value="Aminoacid dehydrogenase-like, N-terminal domain"/>
    <property type="match status" value="1"/>
</dbReference>
<dbReference type="SUPFAM" id="SSF51735">
    <property type="entry name" value="NAD(P)-binding Rossmann-fold domains"/>
    <property type="match status" value="1"/>
</dbReference>
<sequence>MKFAVIGNPISHSLSPVMHRANFNSLGLDDTYEALNIPIEDFHLIKEIISKKELDGFNITIPHKERIIPYLDYVDEQAINAGAVNTVLIKDGKWIGYNTDGIGYVKGLHSVYPDLENAYILILGAGGASKGIAYELAKFLKLKLTVANRTMARFESWNLNINQISLADAENYLAEFDIVINTTPAGMAGNNESIINLKHLSPNTLMSDIIYIPYKTPILEEAERKGNHIYNGLDMFVYQGAESFKIWTNKDADINSMKTAVLQQLKGE</sequence>
<reference key="1">
    <citation type="journal article" date="2007" name="PLoS ONE">
        <title>Molecular correlates of host specialization in Staphylococcus aureus.</title>
        <authorList>
            <person name="Herron-Olson L."/>
            <person name="Fitzgerald J.R."/>
            <person name="Musser J.M."/>
            <person name="Kapur V."/>
        </authorList>
    </citation>
    <scope>NUCLEOTIDE SEQUENCE [LARGE SCALE GENOMIC DNA]</scope>
    <source>
        <strain>bovine RF122 / ET3-1</strain>
    </source>
</reference>
<evidence type="ECO:0000255" key="1">
    <source>
        <dbReference type="HAMAP-Rule" id="MF_00222"/>
    </source>
</evidence>